<comment type="function">
    <text evidence="1">Toxin that causes irreversible contractile paralysis in adult Aedes aegypti resulting in 100% mortality after 24 hours.</text>
</comment>
<comment type="subcellular location">
    <subcellularLocation>
        <location evidence="1">Secreted</location>
    </subcellularLocation>
</comment>
<comment type="tissue specificity">
    <text evidence="4">Expressed by the venom gland.</text>
</comment>
<comment type="domain">
    <text evidence="4">The presence of a 'disulfide through disulfide knot' structurally defines this protein as a knottin.</text>
</comment>
<comment type="mass spectrometry">
    <text>Monoisotopic mass.</text>
</comment>
<comment type="toxic dose">
    <text evidence="1">LD(50) is 38.3 +- 5.9 pmol/g when injected into A.aegypti.</text>
</comment>
<comment type="similarity">
    <text evidence="3">Belongs to the neurotoxin 14 (magi-1) family. 08 (Ltx-4) subfamily.</text>
</comment>
<comment type="caution">
    <text evidence="3">The protein sequence was determined by Edman degradation (AA 1-27) and assigned by comparison with orthologs and mass spectrometry (AA 28-41).</text>
</comment>
<proteinExistence type="evidence at protein level"/>
<reference key="1">
    <citation type="journal article" date="2023" name="Toxins">
        <title>Two novel mosquitocidal peptides isolated from the venom of the Bahia Scarlet tarantula (Lasiodora klugi).</title>
        <authorList>
            <person name="Ahmed J."/>
            <person name="Walker A.A."/>
            <person name="Perdomo H.D."/>
            <person name="Guo S."/>
            <person name="Nixon S.A."/>
            <person name="Vetter I."/>
            <person name="Okoh H.I."/>
            <person name="Shehu D.M."/>
            <person name="Shuaibu M.N."/>
            <person name="Ndams I.S."/>
            <person name="King G.F."/>
            <person name="Herzig V."/>
        </authorList>
    </citation>
    <scope>PROTEIN SEQUENCE</scope>
    <scope>FUNCTION</scope>
    <scope>MASS SPECTROMETRY</scope>
    <scope>SUBCELLULAR LOCATION</scope>
    <scope>TOXIC DOSE</scope>
    <scope>BIOASSAY</scope>
    <scope>3D-STRUCTURE MODELING</scope>
    <source>
        <tissue>Venom</tissue>
    </source>
</reference>
<dbReference type="SMR" id="P0DRD7"/>
<dbReference type="GO" id="GO:0005576">
    <property type="term" value="C:extracellular region"/>
    <property type="evidence" value="ECO:0007669"/>
    <property type="project" value="UniProtKB-SubCell"/>
</dbReference>
<dbReference type="GO" id="GO:0019871">
    <property type="term" value="F:sodium channel inhibitor activity"/>
    <property type="evidence" value="ECO:0007669"/>
    <property type="project" value="InterPro"/>
</dbReference>
<dbReference type="GO" id="GO:0090729">
    <property type="term" value="F:toxin activity"/>
    <property type="evidence" value="ECO:0007669"/>
    <property type="project" value="UniProtKB-KW"/>
</dbReference>
<dbReference type="InterPro" id="IPR012627">
    <property type="entry name" value="Toxin_22"/>
</dbReference>
<dbReference type="Pfam" id="PF08092">
    <property type="entry name" value="Toxin_22"/>
    <property type="match status" value="1"/>
</dbReference>
<accession>P0DRD7</accession>
<protein>
    <recommendedName>
        <fullName evidence="2 3">U-theraphotoxin-Lk1a</fullName>
        <shortName evidence="2">U-TRTX-Lk1a</shortName>
    </recommendedName>
</protein>
<keyword id="KW-0903">Direct protein sequencing</keyword>
<keyword id="KW-1015">Disulfide bond</keyword>
<keyword id="KW-0960">Knottin</keyword>
<keyword id="KW-0528">Neurotoxin</keyword>
<keyword id="KW-0964">Secreted</keyword>
<keyword id="KW-0800">Toxin</keyword>
<feature type="chain" id="PRO_0000461407" description="U-theraphotoxin-Lk1a" evidence="1">
    <location>
        <begin position="1"/>
        <end position="41"/>
    </location>
</feature>
<feature type="disulfide bond" evidence="4">
    <location>
        <begin position="1"/>
        <end position="16"/>
    </location>
</feature>
<feature type="disulfide bond" evidence="4">
    <location>
        <begin position="8"/>
        <end position="21"/>
    </location>
</feature>
<feature type="disulfide bond" evidence="4">
    <location>
        <begin position="15"/>
        <end position="36"/>
    </location>
</feature>
<feature type="unsure residue" description="Y or S" evidence="4">
    <location>
        <position position="18"/>
    </location>
</feature>
<feature type="unsure residue" evidence="4">
    <location>
        <position position="27"/>
    </location>
</feature>
<feature type="unsure residue" description="Assigned by comparison with orthologs and mass spectrometry" evidence="4">
    <location>
        <begin position="28"/>
        <end position="41"/>
    </location>
</feature>
<name>LK1A_LASKL</name>
<organism>
    <name type="scientific">Lasiodora klugi</name>
    <name type="common">Bahia scarlet tarantula</name>
    <name type="synonym">Mygale klugii</name>
    <dbReference type="NCBI Taxonomy" id="2013881"/>
    <lineage>
        <taxon>Eukaryota</taxon>
        <taxon>Metazoa</taxon>
        <taxon>Ecdysozoa</taxon>
        <taxon>Arthropoda</taxon>
        <taxon>Chelicerata</taxon>
        <taxon>Arachnida</taxon>
        <taxon>Araneae</taxon>
        <taxon>Mygalomorphae</taxon>
        <taxon>Theraphosidae</taxon>
        <taxon>Lasiodora</taxon>
    </lineage>
</organism>
<sequence>CGGVDAPCDKDRPDCCSYAECLKPAGYGWWHGTYYCYRKKE</sequence>
<evidence type="ECO:0000269" key="1">
    <source>
    </source>
</evidence>
<evidence type="ECO:0000303" key="2">
    <source>
    </source>
</evidence>
<evidence type="ECO:0000305" key="3"/>
<evidence type="ECO:0000305" key="4">
    <source>
    </source>
</evidence>